<feature type="chain" id="PRO_0000317111" description="RNA binding protein fox-1 homolog 1">
    <location>
        <begin position="1"/>
        <end position="382"/>
    </location>
</feature>
<feature type="domain" description="RRM" evidence="3">
    <location>
        <begin position="117"/>
        <end position="193"/>
    </location>
</feature>
<feature type="region of interest" description="Disordered" evidence="4">
    <location>
        <begin position="1"/>
        <end position="121"/>
    </location>
</feature>
<feature type="region of interest" description="Disordered" evidence="4">
    <location>
        <begin position="357"/>
        <end position="382"/>
    </location>
</feature>
<feature type="compositionally biased region" description="Polar residues" evidence="4">
    <location>
        <begin position="70"/>
        <end position="87"/>
    </location>
</feature>
<feature type="compositionally biased region" description="Low complexity" evidence="4">
    <location>
        <begin position="88"/>
        <end position="99"/>
    </location>
</feature>
<feature type="compositionally biased region" description="Polar residues" evidence="4">
    <location>
        <begin position="100"/>
        <end position="113"/>
    </location>
</feature>
<feature type="site" description="Interaction with RNA" evidence="1">
    <location>
        <position position="118"/>
    </location>
</feature>
<feature type="site" description="Interaction with RNA" evidence="1">
    <location>
        <position position="126"/>
    </location>
</feature>
<feature type="site" description="Interaction with RNA" evidence="1">
    <location>
        <position position="127"/>
    </location>
</feature>
<feature type="site" description="Interaction with RNA" evidence="1">
    <location>
        <position position="151"/>
    </location>
</feature>
<feature type="site" description="Interaction with RNA" evidence="1">
    <location>
        <position position="156"/>
    </location>
</feature>
<feature type="site" description="Interaction with RNA" evidence="1">
    <location>
        <position position="160"/>
    </location>
</feature>
<feature type="site" description="Interaction with RNA" evidence="1">
    <location>
        <position position="184"/>
    </location>
</feature>
<feature type="site" description="Interaction with RNA" evidence="1">
    <location>
        <position position="194"/>
    </location>
</feature>
<feature type="modified residue" description="Asymmetric dimethylarginine" evidence="2">
    <location>
        <position position="317"/>
    </location>
</feature>
<feature type="splice variant" id="VSP_030885" description="In isoform 2." evidence="5">
    <original>M</original>
    <variation>METGQRTHASGTYSFLDRTQHSDIKADCSTCVEIEDRKVSRQQM</variation>
    <location>
        <position position="1"/>
    </location>
</feature>
<feature type="splice variant" id="VSP_030886" description="In isoform 2." evidence="5">
    <original>SYGRVYAADPYHHALAPAPTYGVGAMPQGSSPSTDFRGAKLHTSRPLLSGS</original>
    <variation>RNQFVFVAADEISCNTSAVTDEFMLPTPTTTHLLQPPPTALVPCPKVPAPAQTSEELSCTLPGLCCQAAENLTASPPLLQFMFKVIVAQERK</variation>
    <location>
        <begin position="332"/>
        <end position="382"/>
    </location>
</feature>
<feature type="sequence conflict" description="In Ref. 1; CAH91712." evidence="6" ref="1">
    <original>E</original>
    <variation>G</variation>
    <location>
        <position position="152"/>
    </location>
</feature>
<protein>
    <recommendedName>
        <fullName>RNA binding protein fox-1 homolog 1</fullName>
    </recommendedName>
    <alternativeName>
        <fullName>Ataxin-2-binding protein 1</fullName>
    </alternativeName>
    <alternativeName>
        <fullName>Fox-1 homolog A</fullName>
    </alternativeName>
</protein>
<reference key="1">
    <citation type="submission" date="2004-11" db="EMBL/GenBank/DDBJ databases">
        <authorList>
            <consortium name="The German cDNA consortium"/>
        </authorList>
    </citation>
    <scope>NUCLEOTIDE SEQUENCE [LARGE SCALE MRNA] (ISOFORMS 1 AND 2)</scope>
    <source>
        <tissue>Brain cortex</tissue>
    </source>
</reference>
<sequence>MNCEREQLRGNQEAAAAPDTMAQPYASAQFAPPQNGIPAEYTAPHPHPAPEYTGQTTVPEHTLNLYPPAQTHSEQSPADTSAQTVSGTATQTDDAAPTDGQPQTQPSENTENKSQPKRLHVSNIPFRFRDPDLRQMFGQFGKILDVEIIFNERGSKGFGFVTFENSADADRAREKLHGTVVEGRKIEVNNATARVMTNKKTVNPYTNGWKLNPVVGAVYSPEFYAGTVLLCQANQEGSSMYSAPSSLVYTSAMPGFPYPAATAAAAYRGAHLRGRGRTVYNTFRAAAPPPPIPAYGGVVYQDGFYGADIYGGYAAYRYAQPTPATAAAYSDSYGRVYAADPYHHALAPAPTYGVGAMPQGSSPSTDFRGAKLHTSRPLLSGS</sequence>
<proteinExistence type="evidence at transcript level"/>
<name>RFOX1_PONAB</name>
<evidence type="ECO:0000250" key="1"/>
<evidence type="ECO:0000250" key="2">
    <source>
        <dbReference type="UniProtKB" id="Q9JJ43"/>
    </source>
</evidence>
<evidence type="ECO:0000255" key="3">
    <source>
        <dbReference type="PROSITE-ProRule" id="PRU00176"/>
    </source>
</evidence>
<evidence type="ECO:0000256" key="4">
    <source>
        <dbReference type="SAM" id="MobiDB-lite"/>
    </source>
</evidence>
<evidence type="ECO:0000303" key="5">
    <source ref="1"/>
</evidence>
<evidence type="ECO:0000305" key="6"/>
<comment type="function">
    <text evidence="1">RNA-binding protein that regulates alternative splicing events by binding to 5'-UGCAUGU-3' elements. Prevents binding of U2AF2 to the 3'-splice site. Regulates alternative splicing of tissue-specific exons and of differentially spliced exons during erythropoiesis (By similarity).</text>
</comment>
<comment type="subunit">
    <text evidence="1">Binds to the C-terminus of ATXN2.</text>
</comment>
<comment type="subcellular location">
    <subcellularLocation>
        <location evidence="1">Nucleus</location>
    </subcellularLocation>
    <subcellularLocation>
        <location evidence="1">Cytoplasm</location>
    </subcellularLocation>
</comment>
<comment type="alternative products">
    <event type="alternative splicing"/>
    <isoform>
        <id>Q5NVN8-1</id>
        <name>1</name>
        <sequence type="displayed"/>
    </isoform>
    <isoform>
        <id>Q5NVN8-2</id>
        <name>2</name>
        <sequence type="described" ref="VSP_030885 VSP_030886"/>
    </isoform>
</comment>
<keyword id="KW-0025">Alternative splicing</keyword>
<keyword id="KW-0963">Cytoplasm</keyword>
<keyword id="KW-0488">Methylation</keyword>
<keyword id="KW-0507">mRNA processing</keyword>
<keyword id="KW-0508">mRNA splicing</keyword>
<keyword id="KW-0539">Nucleus</keyword>
<keyword id="KW-1185">Reference proteome</keyword>
<keyword id="KW-0694">RNA-binding</keyword>
<organism>
    <name type="scientific">Pongo abelii</name>
    <name type="common">Sumatran orangutan</name>
    <name type="synonym">Pongo pygmaeus abelii</name>
    <dbReference type="NCBI Taxonomy" id="9601"/>
    <lineage>
        <taxon>Eukaryota</taxon>
        <taxon>Metazoa</taxon>
        <taxon>Chordata</taxon>
        <taxon>Craniata</taxon>
        <taxon>Vertebrata</taxon>
        <taxon>Euteleostomi</taxon>
        <taxon>Mammalia</taxon>
        <taxon>Eutheria</taxon>
        <taxon>Euarchontoglires</taxon>
        <taxon>Primates</taxon>
        <taxon>Haplorrhini</taxon>
        <taxon>Catarrhini</taxon>
        <taxon>Hominidae</taxon>
        <taxon>Pongo</taxon>
    </lineage>
</organism>
<gene>
    <name type="primary">RBFOX1</name>
    <name type="synonym">A2BP1</name>
    <name type="synonym">FOX1</name>
</gene>
<dbReference type="EMBL" id="CR859547">
    <property type="protein sequence ID" value="CAH91712.1"/>
    <property type="molecule type" value="mRNA"/>
</dbReference>
<dbReference type="EMBL" id="CR925977">
    <property type="protein sequence ID" value="CAI29625.1"/>
    <property type="molecule type" value="mRNA"/>
</dbReference>
<dbReference type="RefSeq" id="NP_001125995.1">
    <property type="nucleotide sequence ID" value="NM_001132523.1"/>
</dbReference>
<dbReference type="BMRB" id="Q5NVN8"/>
<dbReference type="SMR" id="Q5NVN8"/>
<dbReference type="FunCoup" id="Q5NVN8">
    <property type="interactions" value="1089"/>
</dbReference>
<dbReference type="STRING" id="9601.ENSPPYP00000008003"/>
<dbReference type="GeneID" id="100172936"/>
<dbReference type="KEGG" id="pon:100172936"/>
<dbReference type="CTD" id="54715"/>
<dbReference type="eggNOG" id="KOG0125">
    <property type="taxonomic scope" value="Eukaryota"/>
</dbReference>
<dbReference type="InParanoid" id="Q5NVN8"/>
<dbReference type="OrthoDB" id="5382468at2759"/>
<dbReference type="Proteomes" id="UP000001595">
    <property type="component" value="Unplaced"/>
</dbReference>
<dbReference type="GO" id="GO:0005737">
    <property type="term" value="C:cytoplasm"/>
    <property type="evidence" value="ECO:0007669"/>
    <property type="project" value="UniProtKB-SubCell"/>
</dbReference>
<dbReference type="GO" id="GO:0005634">
    <property type="term" value="C:nucleus"/>
    <property type="evidence" value="ECO:0007669"/>
    <property type="project" value="UniProtKB-SubCell"/>
</dbReference>
<dbReference type="GO" id="GO:0003729">
    <property type="term" value="F:mRNA binding"/>
    <property type="evidence" value="ECO:0007669"/>
    <property type="project" value="TreeGrafter"/>
</dbReference>
<dbReference type="GO" id="GO:0006397">
    <property type="term" value="P:mRNA processing"/>
    <property type="evidence" value="ECO:0007669"/>
    <property type="project" value="UniProtKB-KW"/>
</dbReference>
<dbReference type="GO" id="GO:0007399">
    <property type="term" value="P:nervous system development"/>
    <property type="evidence" value="ECO:0007669"/>
    <property type="project" value="InterPro"/>
</dbReference>
<dbReference type="GO" id="GO:0000381">
    <property type="term" value="P:regulation of alternative mRNA splicing, via spliceosome"/>
    <property type="evidence" value="ECO:0007669"/>
    <property type="project" value="InterPro"/>
</dbReference>
<dbReference type="GO" id="GO:0008380">
    <property type="term" value="P:RNA splicing"/>
    <property type="evidence" value="ECO:0007669"/>
    <property type="project" value="UniProtKB-KW"/>
</dbReference>
<dbReference type="CDD" id="cd12407">
    <property type="entry name" value="RRM_FOX1_like"/>
    <property type="match status" value="1"/>
</dbReference>
<dbReference type="FunFam" id="3.30.70.330:FF:000375">
    <property type="entry name" value="RNA binding fox-1 homolog 1"/>
    <property type="match status" value="1"/>
</dbReference>
<dbReference type="Gene3D" id="3.30.70.330">
    <property type="match status" value="1"/>
</dbReference>
<dbReference type="InterPro" id="IPR025670">
    <property type="entry name" value="Fox-1_C_dom"/>
</dbReference>
<dbReference type="InterPro" id="IPR034237">
    <property type="entry name" value="FOX1_RRM"/>
</dbReference>
<dbReference type="InterPro" id="IPR012677">
    <property type="entry name" value="Nucleotide-bd_a/b_plait_sf"/>
</dbReference>
<dbReference type="InterPro" id="IPR035979">
    <property type="entry name" value="RBD_domain_sf"/>
</dbReference>
<dbReference type="InterPro" id="IPR017325">
    <property type="entry name" value="RBFOX1-3"/>
</dbReference>
<dbReference type="InterPro" id="IPR047131">
    <property type="entry name" value="RBFOX1-like"/>
</dbReference>
<dbReference type="InterPro" id="IPR000504">
    <property type="entry name" value="RRM_dom"/>
</dbReference>
<dbReference type="PANTHER" id="PTHR15597">
    <property type="entry name" value="ATAXIN 2-BINDING PROTEIN 1-RELATED"/>
    <property type="match status" value="1"/>
</dbReference>
<dbReference type="PANTHER" id="PTHR15597:SF45">
    <property type="entry name" value="RNA BINDING PROTEIN FOX-1 HOMOLOG 1"/>
    <property type="match status" value="1"/>
</dbReference>
<dbReference type="Pfam" id="PF12414">
    <property type="entry name" value="Fox-1_C"/>
    <property type="match status" value="1"/>
</dbReference>
<dbReference type="Pfam" id="PF00076">
    <property type="entry name" value="RRM_1"/>
    <property type="match status" value="1"/>
</dbReference>
<dbReference type="PIRSF" id="PIRSF037932">
    <property type="entry name" value="Ataxin_2_bd_A2BP"/>
    <property type="match status" value="1"/>
</dbReference>
<dbReference type="SMART" id="SM00360">
    <property type="entry name" value="RRM"/>
    <property type="match status" value="1"/>
</dbReference>
<dbReference type="SUPFAM" id="SSF54928">
    <property type="entry name" value="RNA-binding domain, RBD"/>
    <property type="match status" value="1"/>
</dbReference>
<dbReference type="PROSITE" id="PS50102">
    <property type="entry name" value="RRM"/>
    <property type="match status" value="1"/>
</dbReference>
<accession>Q5NVN8</accession>
<accession>Q5R948</accession>